<evidence type="ECO:0000250" key="1">
    <source>
        <dbReference type="UniProtKB" id="Q5SUE7"/>
    </source>
</evidence>
<evidence type="ECO:0000255" key="2">
    <source>
        <dbReference type="PROSITE-ProRule" id="PRU00240"/>
    </source>
</evidence>
<evidence type="ECO:0000255" key="3">
    <source>
        <dbReference type="PROSITE-ProRule" id="PRU00266"/>
    </source>
</evidence>
<evidence type="ECO:0000256" key="4">
    <source>
        <dbReference type="SAM" id="MobiDB-lite"/>
    </source>
</evidence>
<evidence type="ECO:0000305" key="5"/>
<feature type="chain" id="PRO_0000309522" description="Adenosine deaminase domain-containing protein 1">
    <location>
        <begin position="1"/>
        <end position="619"/>
    </location>
</feature>
<feature type="domain" description="DRBM" evidence="3">
    <location>
        <begin position="138"/>
        <end position="206"/>
    </location>
</feature>
<feature type="domain" description="A to I editase" evidence="2">
    <location>
        <begin position="291"/>
        <end position="617"/>
    </location>
</feature>
<feature type="region of interest" description="Disordered" evidence="4">
    <location>
        <begin position="28"/>
        <end position="47"/>
    </location>
</feature>
<accession>Q3KR54</accession>
<keyword id="KW-0217">Developmental protein</keyword>
<keyword id="KW-0221">Differentiation</keyword>
<keyword id="KW-0539">Nucleus</keyword>
<keyword id="KW-1185">Reference proteome</keyword>
<keyword id="KW-0694">RNA-binding</keyword>
<keyword id="KW-0744">Spermatogenesis</keyword>
<organism>
    <name type="scientific">Rattus norvegicus</name>
    <name type="common">Rat</name>
    <dbReference type="NCBI Taxonomy" id="10116"/>
    <lineage>
        <taxon>Eukaryota</taxon>
        <taxon>Metazoa</taxon>
        <taxon>Chordata</taxon>
        <taxon>Craniata</taxon>
        <taxon>Vertebrata</taxon>
        <taxon>Euteleostomi</taxon>
        <taxon>Mammalia</taxon>
        <taxon>Eutheria</taxon>
        <taxon>Euarchontoglires</taxon>
        <taxon>Glires</taxon>
        <taxon>Rodentia</taxon>
        <taxon>Myomorpha</taxon>
        <taxon>Muroidea</taxon>
        <taxon>Muridae</taxon>
        <taxon>Murinae</taxon>
        <taxon>Rattus</taxon>
    </lineage>
</organism>
<comment type="function">
    <text evidence="1">Required for male fertility and normal male germ cell differentiation (By similarity). Plays a role in spermatogenesis (By similarity). Binds to RNA but not to DNA (By similarity).</text>
</comment>
<comment type="subcellular location">
    <subcellularLocation>
        <location evidence="1">Nucleus</location>
    </subcellularLocation>
</comment>
<comment type="similarity">
    <text evidence="5">Belongs to the ADAD family.</text>
</comment>
<protein>
    <recommendedName>
        <fullName>Adenosine deaminase domain-containing protein 1</fullName>
    </recommendedName>
    <alternativeName>
        <fullName>Testis nuclear RNA-binding protein</fullName>
    </alternativeName>
</protein>
<name>ADAD1_RAT</name>
<proteinExistence type="evidence at transcript level"/>
<reference key="1">
    <citation type="journal article" date="2004" name="Genome Res.">
        <title>The status, quality, and expansion of the NIH full-length cDNA project: the Mammalian Gene Collection (MGC).</title>
        <authorList>
            <consortium name="The MGC Project Team"/>
        </authorList>
    </citation>
    <scope>NUCLEOTIDE SEQUENCE [LARGE SCALE MRNA]</scope>
    <source>
        <tissue>Testis</tissue>
    </source>
</reference>
<gene>
    <name type="primary">Adad1</name>
    <name type="synonym">Tenr</name>
</gene>
<sequence length="619" mass="67816">MATAGGSRRAPVPGPRLGLPLAAHLPASLGGEGAKDSLGGEKTSGNNDWFQSSRVPSFAQMLKKNLPVQSSAQTVTLPTGYSSESCSLSNMASKVTQVTGNFPEPLLSKGLSSISNPVLPPKKIPKEFIMKYRRGEINPVSALHQFAQMQRVQLDLKETVTTGNVMGPYFAFCAVVDGIQYKTGLGQNKKESRSNAAKLALDELLQLDEPEPRALEPAGPPPIPAEPIVTPEAAYISKVQYEGRQVQYAKISQLVKETFSQLISSHSQYLKCSSSLAAFIIERGGHHEVVAIGTGEYNYSQCIKPNGRVLHDTHAVVTARRSLLRYFYRQLLLFYSKNPAMMEKSIFCTEPASNLLTLKQNINLYLYMNQLPKGSAQIKSQLRLNPHSISAFEANEELSLHVAVEGKIYLTVYCSADGVNRVNSMSSSDKLTRWEVLGVQGALLSHFIQPVYISSILVGDGNCNDTRGLEIAINQRVDDALTSKLPMFYLVNRPHISLVPTAYPLQINLDHKSLSLNWAQGDNSLEIVDGLSGKITESSPFKSGLSMASRLCKAAMLSRFNLLAKEAKTDDLLEARTYHAAKCLSGPYQEAKALLKAYLQQHGYGSWIVKSPCIEQFSM</sequence>
<dbReference type="EMBL" id="BC105906">
    <property type="protein sequence ID" value="AAI05907.1"/>
    <property type="molecule type" value="mRNA"/>
</dbReference>
<dbReference type="RefSeq" id="NP_001006978.2">
    <property type="nucleotide sequence ID" value="NM_001006977.2"/>
</dbReference>
<dbReference type="SMR" id="Q3KR54"/>
<dbReference type="FunCoup" id="Q3KR54">
    <property type="interactions" value="19"/>
</dbReference>
<dbReference type="STRING" id="10116.ENSRNOP00000023282"/>
<dbReference type="PhosphoSitePlus" id="Q3KR54"/>
<dbReference type="PaxDb" id="10116-ENSRNOP00000023282"/>
<dbReference type="GeneID" id="294979"/>
<dbReference type="KEGG" id="rno:294979"/>
<dbReference type="UCSC" id="RGD:1359309">
    <property type="organism name" value="rat"/>
</dbReference>
<dbReference type="AGR" id="RGD:1359309"/>
<dbReference type="CTD" id="132612"/>
<dbReference type="RGD" id="1359309">
    <property type="gene designation" value="Adad1"/>
</dbReference>
<dbReference type="VEuPathDB" id="HostDB:ENSRNOG00000017246"/>
<dbReference type="eggNOG" id="KOG2777">
    <property type="taxonomic scope" value="Eukaryota"/>
</dbReference>
<dbReference type="InParanoid" id="Q3KR54"/>
<dbReference type="OrthoDB" id="10268011at2759"/>
<dbReference type="PhylomeDB" id="Q3KR54"/>
<dbReference type="TreeFam" id="TF315806"/>
<dbReference type="PRO" id="PR:Q3KR54"/>
<dbReference type="Proteomes" id="UP000002494">
    <property type="component" value="Chromosome 2"/>
</dbReference>
<dbReference type="Bgee" id="ENSRNOG00000017246">
    <property type="expression patterns" value="Expressed in testis and 1 other cell type or tissue"/>
</dbReference>
<dbReference type="ExpressionAtlas" id="Q3KR54">
    <property type="expression patterns" value="baseline and differential"/>
</dbReference>
<dbReference type="GO" id="GO:0005737">
    <property type="term" value="C:cytoplasm"/>
    <property type="evidence" value="ECO:0000318"/>
    <property type="project" value="GO_Central"/>
</dbReference>
<dbReference type="GO" id="GO:0001673">
    <property type="term" value="C:male germ cell nucleus"/>
    <property type="evidence" value="ECO:0000266"/>
    <property type="project" value="RGD"/>
</dbReference>
<dbReference type="GO" id="GO:0005730">
    <property type="term" value="C:nucleolus"/>
    <property type="evidence" value="ECO:0000318"/>
    <property type="project" value="GO_Central"/>
</dbReference>
<dbReference type="GO" id="GO:0003726">
    <property type="term" value="F:double-stranded RNA adenosine deaminase activity"/>
    <property type="evidence" value="ECO:0000318"/>
    <property type="project" value="GO_Central"/>
</dbReference>
<dbReference type="GO" id="GO:0003725">
    <property type="term" value="F:double-stranded RNA binding"/>
    <property type="evidence" value="ECO:0000318"/>
    <property type="project" value="GO_Central"/>
</dbReference>
<dbReference type="GO" id="GO:0003723">
    <property type="term" value="F:RNA binding"/>
    <property type="evidence" value="ECO:0000266"/>
    <property type="project" value="RGD"/>
</dbReference>
<dbReference type="GO" id="GO:0008251">
    <property type="term" value="F:tRNA-specific adenosine deaminase activity"/>
    <property type="evidence" value="ECO:0000318"/>
    <property type="project" value="GO_Central"/>
</dbReference>
<dbReference type="GO" id="GO:0006382">
    <property type="term" value="P:adenosine to inosine editing"/>
    <property type="evidence" value="ECO:0000318"/>
    <property type="project" value="GO_Central"/>
</dbReference>
<dbReference type="GO" id="GO:0006396">
    <property type="term" value="P:RNA processing"/>
    <property type="evidence" value="ECO:0000318"/>
    <property type="project" value="GO_Central"/>
</dbReference>
<dbReference type="GO" id="GO:0007286">
    <property type="term" value="P:spermatid development"/>
    <property type="evidence" value="ECO:0000250"/>
    <property type="project" value="UniProtKB"/>
</dbReference>
<dbReference type="CDD" id="cd19905">
    <property type="entry name" value="DSRM_ADAD1"/>
    <property type="match status" value="1"/>
</dbReference>
<dbReference type="FunFam" id="3.30.160.20:FF:000033">
    <property type="entry name" value="Adenosine deaminase domain-containing 1 (testis-specific)"/>
    <property type="match status" value="1"/>
</dbReference>
<dbReference type="Gene3D" id="3.30.160.20">
    <property type="match status" value="1"/>
</dbReference>
<dbReference type="InterPro" id="IPR002466">
    <property type="entry name" value="A_deamin"/>
</dbReference>
<dbReference type="InterPro" id="IPR044455">
    <property type="entry name" value="ADAD1_DSRM"/>
</dbReference>
<dbReference type="InterPro" id="IPR014720">
    <property type="entry name" value="dsRBD_dom"/>
</dbReference>
<dbReference type="PANTHER" id="PTHR10910:SF103">
    <property type="entry name" value="ADENOSINE DEAMINASE DOMAIN-CONTAINING PROTEIN 1"/>
    <property type="match status" value="1"/>
</dbReference>
<dbReference type="PANTHER" id="PTHR10910">
    <property type="entry name" value="EUKARYOTE SPECIFIC DSRNA BINDING PROTEIN"/>
    <property type="match status" value="1"/>
</dbReference>
<dbReference type="Pfam" id="PF02137">
    <property type="entry name" value="A_deamin"/>
    <property type="match status" value="1"/>
</dbReference>
<dbReference type="Pfam" id="PF00035">
    <property type="entry name" value="dsrm"/>
    <property type="match status" value="1"/>
</dbReference>
<dbReference type="SMART" id="SM00552">
    <property type="entry name" value="ADEAMc"/>
    <property type="match status" value="1"/>
</dbReference>
<dbReference type="SMART" id="SM00358">
    <property type="entry name" value="DSRM"/>
    <property type="match status" value="1"/>
</dbReference>
<dbReference type="SUPFAM" id="SSF54768">
    <property type="entry name" value="dsRNA-binding domain-like"/>
    <property type="match status" value="1"/>
</dbReference>
<dbReference type="PROSITE" id="PS50141">
    <property type="entry name" value="A_DEAMIN_EDITASE"/>
    <property type="match status" value="1"/>
</dbReference>
<dbReference type="PROSITE" id="PS50137">
    <property type="entry name" value="DS_RBD"/>
    <property type="match status" value="1"/>
</dbReference>